<organism>
    <name type="scientific">Bos taurus</name>
    <name type="common">Bovine</name>
    <dbReference type="NCBI Taxonomy" id="9913"/>
    <lineage>
        <taxon>Eukaryota</taxon>
        <taxon>Metazoa</taxon>
        <taxon>Chordata</taxon>
        <taxon>Craniata</taxon>
        <taxon>Vertebrata</taxon>
        <taxon>Euteleostomi</taxon>
        <taxon>Mammalia</taxon>
        <taxon>Eutheria</taxon>
        <taxon>Laurasiatheria</taxon>
        <taxon>Artiodactyla</taxon>
        <taxon>Ruminantia</taxon>
        <taxon>Pecora</taxon>
        <taxon>Bovidae</taxon>
        <taxon>Bovinae</taxon>
        <taxon>Bos</taxon>
    </lineage>
</organism>
<reference key="1">
    <citation type="submission" date="2006-09" db="EMBL/GenBank/DDBJ databases">
        <authorList>
            <consortium name="NIH - Mammalian Gene Collection (MGC) project"/>
        </authorList>
    </citation>
    <scope>NUCLEOTIDE SEQUENCE [LARGE SCALE MRNA]</scope>
    <source>
        <strain>Hereford</strain>
        <tissue>Ascending colon</tissue>
    </source>
</reference>
<accession>Q08DG7</accession>
<comment type="function">
    <text evidence="1">Sequence-specific transcription factor which is part of a developmental regulatory system that provides cells with specific positional identities on the anterior-posterior axis.</text>
</comment>
<comment type="subcellular location">
    <subcellularLocation>
        <location evidence="2">Nucleus</location>
    </subcellularLocation>
</comment>
<comment type="similarity">
    <text evidence="4">Belongs to the Antp homeobox family.</text>
</comment>
<dbReference type="EMBL" id="BC123759">
    <property type="protein sequence ID" value="AAI23760.1"/>
    <property type="molecule type" value="mRNA"/>
</dbReference>
<dbReference type="RefSeq" id="NP_001070293.1">
    <property type="nucleotide sequence ID" value="NM_001076825.1"/>
</dbReference>
<dbReference type="RefSeq" id="XP_024846362.1">
    <property type="nucleotide sequence ID" value="XM_024990594.1"/>
</dbReference>
<dbReference type="RefSeq" id="XP_024846363.1">
    <property type="nucleotide sequence ID" value="XM_024990595.2"/>
</dbReference>
<dbReference type="RefSeq" id="XP_024846364.1">
    <property type="nucleotide sequence ID" value="XM_024990596.2"/>
</dbReference>
<dbReference type="SMR" id="Q08DG7"/>
<dbReference type="FunCoup" id="Q08DG7">
    <property type="interactions" value="111"/>
</dbReference>
<dbReference type="STRING" id="9913.ENSBTAP00000010700"/>
<dbReference type="PaxDb" id="9913-ENSBTAP00000010700"/>
<dbReference type="Ensembl" id="ENSBTAT00000010700.5">
    <property type="protein sequence ID" value="ENSBTAP00000010700.4"/>
    <property type="gene ID" value="ENSBTAG00000008139.6"/>
</dbReference>
<dbReference type="GeneID" id="509991"/>
<dbReference type="KEGG" id="bta:509991"/>
<dbReference type="CTD" id="3200"/>
<dbReference type="VEuPathDB" id="HostDB:ENSBTAG00000008139"/>
<dbReference type="VGNC" id="VGNC:29911">
    <property type="gene designation" value="HOXA3"/>
</dbReference>
<dbReference type="eggNOG" id="KOG0489">
    <property type="taxonomic scope" value="Eukaryota"/>
</dbReference>
<dbReference type="GeneTree" id="ENSGT00940000159522"/>
<dbReference type="HOGENOM" id="CLU_051508_1_0_1"/>
<dbReference type="InParanoid" id="Q08DG7"/>
<dbReference type="OMA" id="PDYDPHP"/>
<dbReference type="OrthoDB" id="6159439at2759"/>
<dbReference type="TreeFam" id="TF315938"/>
<dbReference type="Proteomes" id="UP000009136">
    <property type="component" value="Chromosome 4"/>
</dbReference>
<dbReference type="Bgee" id="ENSBTAG00000008139">
    <property type="expression patterns" value="Expressed in trachea and 82 other cell types or tissues"/>
</dbReference>
<dbReference type="GO" id="GO:0005654">
    <property type="term" value="C:nucleoplasm"/>
    <property type="evidence" value="ECO:0007669"/>
    <property type="project" value="Ensembl"/>
</dbReference>
<dbReference type="GO" id="GO:0005634">
    <property type="term" value="C:nucleus"/>
    <property type="evidence" value="ECO:0000318"/>
    <property type="project" value="GO_Central"/>
</dbReference>
<dbReference type="GO" id="GO:0000981">
    <property type="term" value="F:DNA-binding transcription factor activity, RNA polymerase II-specific"/>
    <property type="evidence" value="ECO:0000318"/>
    <property type="project" value="GO_Central"/>
</dbReference>
<dbReference type="GO" id="GO:0071837">
    <property type="term" value="F:HMG box domain binding"/>
    <property type="evidence" value="ECO:0007669"/>
    <property type="project" value="Ensembl"/>
</dbReference>
<dbReference type="GO" id="GO:0000978">
    <property type="term" value="F:RNA polymerase II cis-regulatory region sequence-specific DNA binding"/>
    <property type="evidence" value="ECO:0000318"/>
    <property type="project" value="GO_Central"/>
</dbReference>
<dbReference type="GO" id="GO:0001525">
    <property type="term" value="P:angiogenesis"/>
    <property type="evidence" value="ECO:0007669"/>
    <property type="project" value="Ensembl"/>
</dbReference>
<dbReference type="GO" id="GO:0048645">
    <property type="term" value="P:animal organ formation"/>
    <property type="evidence" value="ECO:0007669"/>
    <property type="project" value="Ensembl"/>
</dbReference>
<dbReference type="GO" id="GO:0009952">
    <property type="term" value="P:anterior/posterior pattern specification"/>
    <property type="evidence" value="ECO:0000318"/>
    <property type="project" value="GO_Central"/>
</dbReference>
<dbReference type="GO" id="GO:0001974">
    <property type="term" value="P:blood vessel remodeling"/>
    <property type="evidence" value="ECO:0007669"/>
    <property type="project" value="Ensembl"/>
</dbReference>
<dbReference type="GO" id="GO:0051216">
    <property type="term" value="P:cartilage development"/>
    <property type="evidence" value="ECO:0007669"/>
    <property type="project" value="Ensembl"/>
</dbReference>
<dbReference type="GO" id="GO:0048704">
    <property type="term" value="P:embryonic skeletal system morphogenesis"/>
    <property type="evidence" value="ECO:0000318"/>
    <property type="project" value="GO_Central"/>
</dbReference>
<dbReference type="GO" id="GO:0010467">
    <property type="term" value="P:gene expression"/>
    <property type="evidence" value="ECO:0007669"/>
    <property type="project" value="Ensembl"/>
</dbReference>
<dbReference type="GO" id="GO:0021615">
    <property type="term" value="P:glossopharyngeal nerve morphogenesis"/>
    <property type="evidence" value="ECO:0007669"/>
    <property type="project" value="Ensembl"/>
</dbReference>
<dbReference type="GO" id="GO:0060017">
    <property type="term" value="P:parathyroid gland development"/>
    <property type="evidence" value="ECO:0007669"/>
    <property type="project" value="Ensembl"/>
</dbReference>
<dbReference type="GO" id="GO:2000648">
    <property type="term" value="P:positive regulation of stem cell proliferation"/>
    <property type="evidence" value="ECO:0007669"/>
    <property type="project" value="Ensembl"/>
</dbReference>
<dbReference type="GO" id="GO:0006357">
    <property type="term" value="P:regulation of transcription by RNA polymerase II"/>
    <property type="evidence" value="ECO:0000318"/>
    <property type="project" value="GO_Central"/>
</dbReference>
<dbReference type="GO" id="GO:0010159">
    <property type="term" value="P:specification of animal organ position"/>
    <property type="evidence" value="ECO:0007669"/>
    <property type="project" value="Ensembl"/>
</dbReference>
<dbReference type="GO" id="GO:0072089">
    <property type="term" value="P:stem cell proliferation"/>
    <property type="evidence" value="ECO:0007669"/>
    <property type="project" value="Ensembl"/>
</dbReference>
<dbReference type="GO" id="GO:0048538">
    <property type="term" value="P:thymus development"/>
    <property type="evidence" value="ECO:0007669"/>
    <property type="project" value="Ensembl"/>
</dbReference>
<dbReference type="GO" id="GO:0030878">
    <property type="term" value="P:thyroid gland development"/>
    <property type="evidence" value="ECO:0007669"/>
    <property type="project" value="Ensembl"/>
</dbReference>
<dbReference type="CDD" id="cd00086">
    <property type="entry name" value="homeodomain"/>
    <property type="match status" value="1"/>
</dbReference>
<dbReference type="FunFam" id="1.10.10.60:FF:000094">
    <property type="entry name" value="Homeobox protein Hox-A3"/>
    <property type="match status" value="1"/>
</dbReference>
<dbReference type="Gene3D" id="1.10.10.60">
    <property type="entry name" value="Homeodomain-like"/>
    <property type="match status" value="1"/>
</dbReference>
<dbReference type="InterPro" id="IPR025281">
    <property type="entry name" value="DUF4074"/>
</dbReference>
<dbReference type="InterPro" id="IPR001356">
    <property type="entry name" value="HD"/>
</dbReference>
<dbReference type="InterPro" id="IPR020479">
    <property type="entry name" value="HD_metazoa"/>
</dbReference>
<dbReference type="InterPro" id="IPR001827">
    <property type="entry name" value="Homeobox_Antennapedia_CS"/>
</dbReference>
<dbReference type="InterPro" id="IPR017970">
    <property type="entry name" value="Homeobox_CS"/>
</dbReference>
<dbReference type="InterPro" id="IPR009057">
    <property type="entry name" value="Homeodomain-like_sf"/>
</dbReference>
<dbReference type="PANTHER" id="PTHR45664:SF13">
    <property type="entry name" value="HOMEOBOX PROTEIN HOX-A3"/>
    <property type="match status" value="1"/>
</dbReference>
<dbReference type="PANTHER" id="PTHR45664">
    <property type="entry name" value="PROTEIN ZERKNUELLT 1-RELATED"/>
    <property type="match status" value="1"/>
</dbReference>
<dbReference type="Pfam" id="PF13293">
    <property type="entry name" value="DUF4074"/>
    <property type="match status" value="1"/>
</dbReference>
<dbReference type="Pfam" id="PF00046">
    <property type="entry name" value="Homeodomain"/>
    <property type="match status" value="1"/>
</dbReference>
<dbReference type="PRINTS" id="PR00024">
    <property type="entry name" value="HOMEOBOX"/>
</dbReference>
<dbReference type="SMART" id="SM00389">
    <property type="entry name" value="HOX"/>
    <property type="match status" value="1"/>
</dbReference>
<dbReference type="SUPFAM" id="SSF46689">
    <property type="entry name" value="Homeodomain-like"/>
    <property type="match status" value="1"/>
</dbReference>
<dbReference type="PROSITE" id="PS00032">
    <property type="entry name" value="ANTENNAPEDIA"/>
    <property type="match status" value="1"/>
</dbReference>
<dbReference type="PROSITE" id="PS00027">
    <property type="entry name" value="HOMEOBOX_1"/>
    <property type="match status" value="1"/>
</dbReference>
<dbReference type="PROSITE" id="PS50071">
    <property type="entry name" value="HOMEOBOX_2"/>
    <property type="match status" value="1"/>
</dbReference>
<name>HXA3_BOVIN</name>
<feature type="chain" id="PRO_0000274485" description="Homeobox protein Hox-A3">
    <location>
        <begin position="1"/>
        <end position="442"/>
    </location>
</feature>
<feature type="DNA-binding region" description="Homeobox" evidence="2">
    <location>
        <begin position="191"/>
        <end position="250"/>
    </location>
</feature>
<feature type="region of interest" description="Disordered" evidence="3">
    <location>
        <begin position="73"/>
        <end position="147"/>
    </location>
</feature>
<feature type="region of interest" description="Disordered" evidence="3">
    <location>
        <begin position="159"/>
        <end position="196"/>
    </location>
</feature>
<feature type="region of interest" description="Disordered" evidence="3">
    <location>
        <begin position="247"/>
        <end position="310"/>
    </location>
</feature>
<feature type="region of interest" description="Disordered" evidence="3">
    <location>
        <begin position="399"/>
        <end position="442"/>
    </location>
</feature>
<feature type="short sequence motif" description="Antp-type hexapeptide">
    <location>
        <begin position="155"/>
        <end position="160"/>
    </location>
</feature>
<feature type="compositionally biased region" description="Pro residues" evidence="3">
    <location>
        <begin position="79"/>
        <end position="125"/>
    </location>
</feature>
<feature type="compositionally biased region" description="Low complexity" evidence="3">
    <location>
        <begin position="126"/>
        <end position="135"/>
    </location>
</feature>
<feature type="compositionally biased region" description="Polar residues" evidence="3">
    <location>
        <begin position="165"/>
        <end position="177"/>
    </location>
</feature>
<feature type="compositionally biased region" description="Polar residues" evidence="3">
    <location>
        <begin position="187"/>
        <end position="196"/>
    </location>
</feature>
<feature type="compositionally biased region" description="Polar residues" evidence="3">
    <location>
        <begin position="276"/>
        <end position="285"/>
    </location>
</feature>
<feature type="compositionally biased region" description="Low complexity" evidence="3">
    <location>
        <begin position="300"/>
        <end position="309"/>
    </location>
</feature>
<keyword id="KW-0217">Developmental protein</keyword>
<keyword id="KW-0238">DNA-binding</keyword>
<keyword id="KW-0371">Homeobox</keyword>
<keyword id="KW-0539">Nucleus</keyword>
<keyword id="KW-1185">Reference proteome</keyword>
<keyword id="KW-0804">Transcription</keyword>
<keyword id="KW-0805">Transcription regulation</keyword>
<gene>
    <name type="primary">HOXA3</name>
</gene>
<proteinExistence type="evidence at transcript level"/>
<sequence>MQKATYYDSSAIYGGYPYQAANGFGYNANQQPYPASTALGADGEYHRPACSLQSPANAGSHPKAHELSEACLRTLSGPPSQPPVLGEPPLAPPPPQAAPPAPPQPPAPPQPPAPTPAAPPPPSSVSPPQNGSSNPTPASAAKSPLLNSPTVAKQIFPWMKESRQNTKQKTSGSSSGESCAGDKSPPGQASSKRARTAYTSAQLVELEKEFHFNRYLCRPRRVEMANLLNLTERQIKIWFQNRRMKYKKDQKGKGMLTSSGGQSPSRSPVPPGPGSYLNSMHSLVNSVPYEPQSPPPFSKPPQGAYGLPPASYPAPLPSCAPPPPQKRYTAAGAGAGGTPDYDPHAHGLQGNGSYGTPHLQGSPVFVGGSYVEPMSNSGPPLFGLTHLPHTASAAMDYGGAGPLGSGHHHGPGPGEPHPTYTDLTAHHPSQGRIQEAPKLTHL</sequence>
<evidence type="ECO:0000250" key="1"/>
<evidence type="ECO:0000255" key="2">
    <source>
        <dbReference type="PROSITE-ProRule" id="PRU00108"/>
    </source>
</evidence>
<evidence type="ECO:0000256" key="3">
    <source>
        <dbReference type="SAM" id="MobiDB-lite"/>
    </source>
</evidence>
<evidence type="ECO:0000305" key="4"/>
<protein>
    <recommendedName>
        <fullName>Homeobox protein Hox-A3</fullName>
    </recommendedName>
</protein>